<feature type="chain" id="PRO_0000280409" description="Zinc finger protein 354C">
    <location>
        <begin position="1"/>
        <end position="560"/>
    </location>
</feature>
<feature type="domain" description="KRAB" evidence="4">
    <location>
        <begin position="14"/>
        <end position="84"/>
    </location>
</feature>
<feature type="zinc finger region" description="C2H2-type 1" evidence="3">
    <location>
        <begin position="218"/>
        <end position="240"/>
    </location>
</feature>
<feature type="zinc finger region" description="C2H2-type 2" evidence="3">
    <location>
        <begin position="246"/>
        <end position="268"/>
    </location>
</feature>
<feature type="zinc finger region" description="C2H2-type 3" evidence="3">
    <location>
        <begin position="274"/>
        <end position="296"/>
    </location>
</feature>
<feature type="zinc finger region" description="C2H2-type 4" evidence="3">
    <location>
        <begin position="302"/>
        <end position="324"/>
    </location>
</feature>
<feature type="zinc finger region" description="C2H2-type 5" evidence="3">
    <location>
        <begin position="330"/>
        <end position="352"/>
    </location>
</feature>
<feature type="zinc finger region" description="C2H2-type 6" evidence="3">
    <location>
        <begin position="358"/>
        <end position="380"/>
    </location>
</feature>
<feature type="zinc finger region" description="C2H2-type 7" evidence="3">
    <location>
        <begin position="386"/>
        <end position="408"/>
    </location>
</feature>
<feature type="zinc finger region" description="C2H2-type 8" evidence="3">
    <location>
        <begin position="414"/>
        <end position="436"/>
    </location>
</feature>
<feature type="zinc finger region" description="C2H2-type 9" evidence="3">
    <location>
        <begin position="442"/>
        <end position="464"/>
    </location>
</feature>
<feature type="zinc finger region" description="C2H2-type 10" evidence="3">
    <location>
        <begin position="470"/>
        <end position="492"/>
    </location>
</feature>
<feature type="zinc finger region" description="C2H2-type 11" evidence="3">
    <location>
        <begin position="498"/>
        <end position="520"/>
    </location>
</feature>
<feature type="region of interest" description="Disordered" evidence="5">
    <location>
        <begin position="139"/>
        <end position="168"/>
    </location>
</feature>
<feature type="cross-link" description="Glycyl lysine isopeptide (Lys-Gly) (interchain with G-Cter in SUMO2)" evidence="1">
    <location>
        <position position="112"/>
    </location>
</feature>
<feature type="cross-link" description="Glycyl lysine isopeptide (Lys-Gly) (interchain with G-Cter in SUMO2)" evidence="1">
    <location>
        <position position="169"/>
    </location>
</feature>
<feature type="sequence conflict" description="In Ref. 2; BAC39738." evidence="8" ref="2">
    <original>E</original>
    <variation>K</variation>
    <location>
        <position position="77"/>
    </location>
</feature>
<feature type="sequence conflict" description="In Ref. 2; BAE26722." evidence="8" ref="2">
    <original>E</original>
    <variation>K</variation>
    <location>
        <position position="87"/>
    </location>
</feature>
<feature type="sequence conflict" description="In Ref. 2; BAE26722." evidence="8" ref="2">
    <original>G</original>
    <variation>D</variation>
    <location>
        <position position="284"/>
    </location>
</feature>
<feature type="sequence conflict" description="In Ref. 2; BAE26722." evidence="8" ref="2">
    <original>S</original>
    <variation>P</variation>
    <location>
        <position position="287"/>
    </location>
</feature>
<comment type="function">
    <text evidence="1 2 7">Transcriptional repressor that inhibits endothelial angiogenic sprouting (By similarity). Suppresses osteogenic effects of RUNX2 and may be involved in osteoblastic differentiation (By similarity). Plays a role in postnatal myogenesis, may be involved in the regulation of satellite cells self-renewal (PubMed:27446912).</text>
</comment>
<comment type="subunit">
    <text evidence="1 2">Interacts with RUNX2. Binds consensus element OSE2. Interacts with TRIM28.</text>
</comment>
<comment type="subcellular location">
    <subcellularLocation>
        <location evidence="2">Nucleus</location>
    </subcellularLocation>
    <subcellularLocation>
        <location evidence="1">Nucleus membrane</location>
    </subcellularLocation>
    <subcellularLocation>
        <location evidence="1">Cytoplasm</location>
    </subcellularLocation>
</comment>
<comment type="tissue specificity">
    <text evidence="6 7">Expressed in brain. Lower levels in kidney, heart, lung, spleen and eye. Down-regulated during kidney maturation. Expressed in embryonic myogenic progenitor cells, not expressed in adult and aged satellite cells (PubMed:27446912).</text>
</comment>
<comment type="developmental stage">
    <text evidence="7">In myogenic progenitor cells, expressed during early myogenic development (11.5 dpc) to be gradually down-regulated during the fetal stages (from 14.5 dpc to adulthood).</text>
</comment>
<comment type="domain">
    <text evidence="1 2">KRAB domain is essential for transcriptional repressor activity and ability to inhibit endothelial angiogenic sprouting. Not required for nuclear targeting or for DNA binding.</text>
</comment>
<comment type="domain">
    <text evidence="2">Zinc finger region is involved in nuclear targeting and DNA-binding.</text>
</comment>
<comment type="similarity">
    <text evidence="8">Belongs to the krueppel C2H2-type zinc-finger protein family.</text>
</comment>
<comment type="sequence caution" evidence="8">
    <conflict type="erroneous initiation">
        <sequence resource="EMBL-CDS" id="BAD90379"/>
    </conflict>
    <text>Extended N-terminus.</text>
</comment>
<organism>
    <name type="scientific">Mus musculus</name>
    <name type="common">Mouse</name>
    <dbReference type="NCBI Taxonomy" id="10090"/>
    <lineage>
        <taxon>Eukaryota</taxon>
        <taxon>Metazoa</taxon>
        <taxon>Chordata</taxon>
        <taxon>Craniata</taxon>
        <taxon>Vertebrata</taxon>
        <taxon>Euteleostomi</taxon>
        <taxon>Mammalia</taxon>
        <taxon>Eutheria</taxon>
        <taxon>Euarchontoglires</taxon>
        <taxon>Glires</taxon>
        <taxon>Rodentia</taxon>
        <taxon>Myomorpha</taxon>
        <taxon>Muroidea</taxon>
        <taxon>Muridae</taxon>
        <taxon>Murinae</taxon>
        <taxon>Mus</taxon>
        <taxon>Mus</taxon>
    </lineage>
</organism>
<keyword id="KW-0037">Angiogenesis</keyword>
<keyword id="KW-0963">Cytoplasm</keyword>
<keyword id="KW-0238">DNA-binding</keyword>
<keyword id="KW-1017">Isopeptide bond</keyword>
<keyword id="KW-0472">Membrane</keyword>
<keyword id="KW-0479">Metal-binding</keyword>
<keyword id="KW-0539">Nucleus</keyword>
<keyword id="KW-1185">Reference proteome</keyword>
<keyword id="KW-0677">Repeat</keyword>
<keyword id="KW-0678">Repressor</keyword>
<keyword id="KW-0804">Transcription</keyword>
<keyword id="KW-0805">Transcription regulation</keyword>
<keyword id="KW-0832">Ubl conjugation</keyword>
<keyword id="KW-0862">Zinc</keyword>
<keyword id="KW-0863">Zinc-finger</keyword>
<gene>
    <name type="primary">Znf354c</name>
    <name type="synonym">Kiaa4218</name>
    <name type="synonym">Kid3</name>
    <name type="synonym">Zfp354c</name>
</gene>
<reference key="1">
    <citation type="journal article" date="2000" name="Biochim. Biophys. Acta">
        <title>Characterisation, chromosomal localisation and expression of the mouse Kid3 gene.</title>
        <authorList>
            <person name="Watson R.P."/>
            <person name="Tekki-Kessaris N."/>
            <person name="Boulter C.A."/>
        </authorList>
    </citation>
    <scope>NUCLEOTIDE SEQUENCE [MRNA]</scope>
    <scope>TISSUE SPECIFICITY</scope>
    <scope>DEVELOPMENTAL STAGE</scope>
</reference>
<reference key="2">
    <citation type="journal article" date="2005" name="Science">
        <title>The transcriptional landscape of the mammalian genome.</title>
        <authorList>
            <person name="Carninci P."/>
            <person name="Kasukawa T."/>
            <person name="Katayama S."/>
            <person name="Gough J."/>
            <person name="Frith M.C."/>
            <person name="Maeda N."/>
            <person name="Oyama R."/>
            <person name="Ravasi T."/>
            <person name="Lenhard B."/>
            <person name="Wells C."/>
            <person name="Kodzius R."/>
            <person name="Shimokawa K."/>
            <person name="Bajic V.B."/>
            <person name="Brenner S.E."/>
            <person name="Batalov S."/>
            <person name="Forrest A.R."/>
            <person name="Zavolan M."/>
            <person name="Davis M.J."/>
            <person name="Wilming L.G."/>
            <person name="Aidinis V."/>
            <person name="Allen J.E."/>
            <person name="Ambesi-Impiombato A."/>
            <person name="Apweiler R."/>
            <person name="Aturaliya R.N."/>
            <person name="Bailey T.L."/>
            <person name="Bansal M."/>
            <person name="Baxter L."/>
            <person name="Beisel K.W."/>
            <person name="Bersano T."/>
            <person name="Bono H."/>
            <person name="Chalk A.M."/>
            <person name="Chiu K.P."/>
            <person name="Choudhary V."/>
            <person name="Christoffels A."/>
            <person name="Clutterbuck D.R."/>
            <person name="Crowe M.L."/>
            <person name="Dalla E."/>
            <person name="Dalrymple B.P."/>
            <person name="de Bono B."/>
            <person name="Della Gatta G."/>
            <person name="di Bernardo D."/>
            <person name="Down T."/>
            <person name="Engstrom P."/>
            <person name="Fagiolini M."/>
            <person name="Faulkner G."/>
            <person name="Fletcher C.F."/>
            <person name="Fukushima T."/>
            <person name="Furuno M."/>
            <person name="Futaki S."/>
            <person name="Gariboldi M."/>
            <person name="Georgii-Hemming P."/>
            <person name="Gingeras T.R."/>
            <person name="Gojobori T."/>
            <person name="Green R.E."/>
            <person name="Gustincich S."/>
            <person name="Harbers M."/>
            <person name="Hayashi Y."/>
            <person name="Hensch T.K."/>
            <person name="Hirokawa N."/>
            <person name="Hill D."/>
            <person name="Huminiecki L."/>
            <person name="Iacono M."/>
            <person name="Ikeo K."/>
            <person name="Iwama A."/>
            <person name="Ishikawa T."/>
            <person name="Jakt M."/>
            <person name="Kanapin A."/>
            <person name="Katoh M."/>
            <person name="Kawasawa Y."/>
            <person name="Kelso J."/>
            <person name="Kitamura H."/>
            <person name="Kitano H."/>
            <person name="Kollias G."/>
            <person name="Krishnan S.P."/>
            <person name="Kruger A."/>
            <person name="Kummerfeld S.K."/>
            <person name="Kurochkin I.V."/>
            <person name="Lareau L.F."/>
            <person name="Lazarevic D."/>
            <person name="Lipovich L."/>
            <person name="Liu J."/>
            <person name="Liuni S."/>
            <person name="McWilliam S."/>
            <person name="Madan Babu M."/>
            <person name="Madera M."/>
            <person name="Marchionni L."/>
            <person name="Matsuda H."/>
            <person name="Matsuzawa S."/>
            <person name="Miki H."/>
            <person name="Mignone F."/>
            <person name="Miyake S."/>
            <person name="Morris K."/>
            <person name="Mottagui-Tabar S."/>
            <person name="Mulder N."/>
            <person name="Nakano N."/>
            <person name="Nakauchi H."/>
            <person name="Ng P."/>
            <person name="Nilsson R."/>
            <person name="Nishiguchi S."/>
            <person name="Nishikawa S."/>
            <person name="Nori F."/>
            <person name="Ohara O."/>
            <person name="Okazaki Y."/>
            <person name="Orlando V."/>
            <person name="Pang K.C."/>
            <person name="Pavan W.J."/>
            <person name="Pavesi G."/>
            <person name="Pesole G."/>
            <person name="Petrovsky N."/>
            <person name="Piazza S."/>
            <person name="Reed J."/>
            <person name="Reid J.F."/>
            <person name="Ring B.Z."/>
            <person name="Ringwald M."/>
            <person name="Rost B."/>
            <person name="Ruan Y."/>
            <person name="Salzberg S.L."/>
            <person name="Sandelin A."/>
            <person name="Schneider C."/>
            <person name="Schoenbach C."/>
            <person name="Sekiguchi K."/>
            <person name="Semple C.A."/>
            <person name="Seno S."/>
            <person name="Sessa L."/>
            <person name="Sheng Y."/>
            <person name="Shibata Y."/>
            <person name="Shimada H."/>
            <person name="Shimada K."/>
            <person name="Silva D."/>
            <person name="Sinclair B."/>
            <person name="Sperling S."/>
            <person name="Stupka E."/>
            <person name="Sugiura K."/>
            <person name="Sultana R."/>
            <person name="Takenaka Y."/>
            <person name="Taki K."/>
            <person name="Tammoja K."/>
            <person name="Tan S.L."/>
            <person name="Tang S."/>
            <person name="Taylor M.S."/>
            <person name="Tegner J."/>
            <person name="Teichmann S.A."/>
            <person name="Ueda H.R."/>
            <person name="van Nimwegen E."/>
            <person name="Verardo R."/>
            <person name="Wei C.L."/>
            <person name="Yagi K."/>
            <person name="Yamanishi H."/>
            <person name="Zabarovsky E."/>
            <person name="Zhu S."/>
            <person name="Zimmer A."/>
            <person name="Hide W."/>
            <person name="Bult C."/>
            <person name="Grimmond S.M."/>
            <person name="Teasdale R.D."/>
            <person name="Liu E.T."/>
            <person name="Brusic V."/>
            <person name="Quackenbush J."/>
            <person name="Wahlestedt C."/>
            <person name="Mattick J.S."/>
            <person name="Hume D.A."/>
            <person name="Kai C."/>
            <person name="Sasaki D."/>
            <person name="Tomaru Y."/>
            <person name="Fukuda S."/>
            <person name="Kanamori-Katayama M."/>
            <person name="Suzuki M."/>
            <person name="Aoki J."/>
            <person name="Arakawa T."/>
            <person name="Iida J."/>
            <person name="Imamura K."/>
            <person name="Itoh M."/>
            <person name="Kato T."/>
            <person name="Kawaji H."/>
            <person name="Kawagashira N."/>
            <person name="Kawashima T."/>
            <person name="Kojima M."/>
            <person name="Kondo S."/>
            <person name="Konno H."/>
            <person name="Nakano K."/>
            <person name="Ninomiya N."/>
            <person name="Nishio T."/>
            <person name="Okada M."/>
            <person name="Plessy C."/>
            <person name="Shibata K."/>
            <person name="Shiraki T."/>
            <person name="Suzuki S."/>
            <person name="Tagami M."/>
            <person name="Waki K."/>
            <person name="Watahiki A."/>
            <person name="Okamura-Oho Y."/>
            <person name="Suzuki H."/>
            <person name="Kawai J."/>
            <person name="Hayashizaki Y."/>
        </authorList>
    </citation>
    <scope>NUCLEOTIDE SEQUENCE [LARGE SCALE MRNA]</scope>
    <source>
        <strain>C57BL/6J</strain>
        <tissue>Head</tissue>
        <tissue>Placenta</tissue>
    </source>
</reference>
<reference key="3">
    <citation type="submission" date="2005-02" db="EMBL/GenBank/DDBJ databases">
        <title>Prediction of the coding sequences of mouse homologues of KIAA gene. The complete nucleotide sequences of mouse KIAA-homologous cDNAs identified by screening of terminal sequences of cDNA clones randomly sampled from size-fractionated libraries.</title>
        <authorList>
            <person name="Okazaki N."/>
            <person name="Kikuno R.F."/>
            <person name="Ohara R."/>
            <person name="Inamoto S."/>
            <person name="Nagase T."/>
            <person name="Ohara O."/>
            <person name="Koga H."/>
        </authorList>
    </citation>
    <scope>NUCLEOTIDE SEQUENCE [LARGE SCALE MRNA]</scope>
    <source>
        <tissue>Embryonic tail</tissue>
    </source>
</reference>
<reference key="4">
    <citation type="journal article" date="2009" name="PLoS Biol.">
        <title>Lineage-specific biology revealed by a finished genome assembly of the mouse.</title>
        <authorList>
            <person name="Church D.M."/>
            <person name="Goodstadt L."/>
            <person name="Hillier L.W."/>
            <person name="Zody M.C."/>
            <person name="Goldstein S."/>
            <person name="She X."/>
            <person name="Bult C.J."/>
            <person name="Agarwala R."/>
            <person name="Cherry J.L."/>
            <person name="DiCuccio M."/>
            <person name="Hlavina W."/>
            <person name="Kapustin Y."/>
            <person name="Meric P."/>
            <person name="Maglott D."/>
            <person name="Birtle Z."/>
            <person name="Marques A.C."/>
            <person name="Graves T."/>
            <person name="Zhou S."/>
            <person name="Teague B."/>
            <person name="Potamousis K."/>
            <person name="Churas C."/>
            <person name="Place M."/>
            <person name="Herschleb J."/>
            <person name="Runnheim R."/>
            <person name="Forrest D."/>
            <person name="Amos-Landgraf J."/>
            <person name="Schwartz D.C."/>
            <person name="Cheng Z."/>
            <person name="Lindblad-Toh K."/>
            <person name="Eichler E.E."/>
            <person name="Ponting C.P."/>
        </authorList>
    </citation>
    <scope>NUCLEOTIDE SEQUENCE [LARGE SCALE GENOMIC DNA]</scope>
    <source>
        <strain>C57BL/6J</strain>
    </source>
</reference>
<reference key="5">
    <citation type="journal article" date="2004" name="Genome Res.">
        <title>The status, quality, and expansion of the NIH full-length cDNA project: the Mammalian Gene Collection (MGC).</title>
        <authorList>
            <consortium name="The MGC Project Team"/>
        </authorList>
    </citation>
    <scope>NUCLEOTIDE SEQUENCE [LARGE SCALE MRNA]</scope>
    <source>
        <strain>C57BL/6J</strain>
        <tissue>Head</tissue>
    </source>
</reference>
<reference key="6">
    <citation type="journal article" date="2016" name="Front. Cell Dev. Biol.">
        <title>Gene expression profiling of muscle stem cells identifies novel regulators of postnatal myogenesis.</title>
        <authorList>
            <person name="Alonso-Martin S."/>
            <person name="Rochat A."/>
            <person name="Mademtzoglou D."/>
            <person name="Morais J."/>
            <person name="de Reynies A."/>
            <person name="Aurade F."/>
            <person name="Chang T.H."/>
            <person name="Zammit P.S."/>
            <person name="Relaix F."/>
        </authorList>
    </citation>
    <scope>FUNCTION</scope>
    <scope>DEVELOPMENTAL STAGE</scope>
    <scope>TISSUE SPECIFICITY</scope>
</reference>
<name>Z354C_MOUSE</name>
<accession>Q571J5</accession>
<accession>Q3UKS9</accession>
<accession>Q8C365</accession>
<accession>Q9JLD3</accession>
<evidence type="ECO:0000250" key="1">
    <source>
        <dbReference type="UniProtKB" id="Q86Y25"/>
    </source>
</evidence>
<evidence type="ECO:0000250" key="2">
    <source>
        <dbReference type="UniProtKB" id="Q9EPU7"/>
    </source>
</evidence>
<evidence type="ECO:0000255" key="3">
    <source>
        <dbReference type="PROSITE-ProRule" id="PRU00042"/>
    </source>
</evidence>
<evidence type="ECO:0000255" key="4">
    <source>
        <dbReference type="PROSITE-ProRule" id="PRU00119"/>
    </source>
</evidence>
<evidence type="ECO:0000256" key="5">
    <source>
        <dbReference type="SAM" id="MobiDB-lite"/>
    </source>
</evidence>
<evidence type="ECO:0000269" key="6">
    <source>
    </source>
</evidence>
<evidence type="ECO:0000269" key="7">
    <source>
    </source>
</evidence>
<evidence type="ECO:0000305" key="8"/>
<proteinExistence type="evidence at transcript level"/>
<dbReference type="EMBL" id="AF192804">
    <property type="protein sequence ID" value="AAF35173.1"/>
    <property type="molecule type" value="mRNA"/>
</dbReference>
<dbReference type="EMBL" id="AK086760">
    <property type="protein sequence ID" value="BAC39738.1"/>
    <property type="molecule type" value="mRNA"/>
</dbReference>
<dbReference type="EMBL" id="AK145882">
    <property type="protein sequence ID" value="BAE26722.1"/>
    <property type="molecule type" value="mRNA"/>
</dbReference>
<dbReference type="EMBL" id="AK220194">
    <property type="protein sequence ID" value="BAD90379.1"/>
    <property type="status" value="ALT_INIT"/>
    <property type="molecule type" value="mRNA"/>
</dbReference>
<dbReference type="EMBL" id="AL627215">
    <property type="status" value="NOT_ANNOTATED_CDS"/>
    <property type="molecule type" value="Genomic_DNA"/>
</dbReference>
<dbReference type="EMBL" id="BC079908">
    <property type="protein sequence ID" value="AAH79908.1"/>
    <property type="molecule type" value="mRNA"/>
</dbReference>
<dbReference type="CCDS" id="CCDS24637.1"/>
<dbReference type="RefSeq" id="NP_038950.3">
    <property type="nucleotide sequence ID" value="NM_013922.4"/>
</dbReference>
<dbReference type="SMR" id="Q571J5"/>
<dbReference type="FunCoup" id="Q571J5">
    <property type="interactions" value="941"/>
</dbReference>
<dbReference type="STRING" id="10090.ENSMUSP00000104763"/>
<dbReference type="iPTMnet" id="Q571J5"/>
<dbReference type="PhosphoSitePlus" id="Q571J5"/>
<dbReference type="SwissPalm" id="Q571J5"/>
<dbReference type="PaxDb" id="10090-ENSMUSP00000104763"/>
<dbReference type="PeptideAtlas" id="Q571J5"/>
<dbReference type="ProteomicsDB" id="275259"/>
<dbReference type="Antibodypedia" id="29471">
    <property type="antibodies" value="55 antibodies from 13 providers"/>
</dbReference>
<dbReference type="DNASU" id="30944"/>
<dbReference type="Ensembl" id="ENSMUST00000000632.7">
    <property type="protein sequence ID" value="ENSMUSP00000000632.7"/>
    <property type="gene ID" value="ENSMUSG00000044807.14"/>
</dbReference>
<dbReference type="Ensembl" id="ENSMUST00000109135.9">
    <property type="protein sequence ID" value="ENSMUSP00000104763.3"/>
    <property type="gene ID" value="ENSMUSG00000044807.14"/>
</dbReference>
<dbReference type="GeneID" id="30944"/>
<dbReference type="KEGG" id="mmu:30944"/>
<dbReference type="UCSC" id="uc007isq.1">
    <property type="organism name" value="mouse"/>
</dbReference>
<dbReference type="AGR" id="MGI:1353621"/>
<dbReference type="CTD" id="30944"/>
<dbReference type="MGI" id="MGI:1353621">
    <property type="gene designation" value="Zfp354c"/>
</dbReference>
<dbReference type="VEuPathDB" id="HostDB:ENSMUSG00000044807"/>
<dbReference type="eggNOG" id="KOG1721">
    <property type="taxonomic scope" value="Eukaryota"/>
</dbReference>
<dbReference type="GeneTree" id="ENSGT00940000162715"/>
<dbReference type="HOGENOM" id="CLU_002678_44_5_1"/>
<dbReference type="InParanoid" id="Q571J5"/>
<dbReference type="OMA" id="STFIEHQ"/>
<dbReference type="OrthoDB" id="6077919at2759"/>
<dbReference type="PhylomeDB" id="Q571J5"/>
<dbReference type="TreeFam" id="TF350822"/>
<dbReference type="Reactome" id="R-MMU-212436">
    <property type="pathway name" value="Generic Transcription Pathway"/>
</dbReference>
<dbReference type="BioGRID-ORCS" id="30944">
    <property type="hits" value="2 hits in 75 CRISPR screens"/>
</dbReference>
<dbReference type="PRO" id="PR:Q571J5"/>
<dbReference type="Proteomes" id="UP000000589">
    <property type="component" value="Chromosome 11"/>
</dbReference>
<dbReference type="RNAct" id="Q571J5">
    <property type="molecule type" value="protein"/>
</dbReference>
<dbReference type="Bgee" id="ENSMUSG00000044807">
    <property type="expression patterns" value="Expressed in embryonic brain and 214 other cell types or tissues"/>
</dbReference>
<dbReference type="GO" id="GO:0005737">
    <property type="term" value="C:cytoplasm"/>
    <property type="evidence" value="ECO:0000250"/>
    <property type="project" value="UniProtKB"/>
</dbReference>
<dbReference type="GO" id="GO:0031965">
    <property type="term" value="C:nuclear membrane"/>
    <property type="evidence" value="ECO:0000250"/>
    <property type="project" value="UniProtKB"/>
</dbReference>
<dbReference type="GO" id="GO:0005654">
    <property type="term" value="C:nucleoplasm"/>
    <property type="evidence" value="ECO:0007669"/>
    <property type="project" value="Ensembl"/>
</dbReference>
<dbReference type="GO" id="GO:0005634">
    <property type="term" value="C:nucleus"/>
    <property type="evidence" value="ECO:0000314"/>
    <property type="project" value="MGI"/>
</dbReference>
<dbReference type="GO" id="GO:0003677">
    <property type="term" value="F:DNA binding"/>
    <property type="evidence" value="ECO:0007669"/>
    <property type="project" value="UniProtKB-KW"/>
</dbReference>
<dbReference type="GO" id="GO:0001227">
    <property type="term" value="F:DNA-binding transcription repressor activity, RNA polymerase II-specific"/>
    <property type="evidence" value="ECO:0000250"/>
    <property type="project" value="UniProtKB"/>
</dbReference>
<dbReference type="GO" id="GO:0008270">
    <property type="term" value="F:zinc ion binding"/>
    <property type="evidence" value="ECO:0007669"/>
    <property type="project" value="UniProtKB-KW"/>
</dbReference>
<dbReference type="GO" id="GO:0001525">
    <property type="term" value="P:angiogenesis"/>
    <property type="evidence" value="ECO:0007669"/>
    <property type="project" value="UniProtKB-KW"/>
</dbReference>
<dbReference type="GO" id="GO:1903671">
    <property type="term" value="P:negative regulation of sprouting angiogenesis"/>
    <property type="evidence" value="ECO:0000250"/>
    <property type="project" value="UniProtKB"/>
</dbReference>
<dbReference type="CDD" id="cd07765">
    <property type="entry name" value="KRAB_A-box"/>
    <property type="match status" value="1"/>
</dbReference>
<dbReference type="FunFam" id="3.30.160.60:FF:000321">
    <property type="entry name" value="myeloid zinc finger 1 isoform X1"/>
    <property type="match status" value="1"/>
</dbReference>
<dbReference type="FunFam" id="3.30.160.60:FF:000139">
    <property type="entry name" value="zinc finger protein 1 homolog"/>
    <property type="match status" value="1"/>
</dbReference>
<dbReference type="FunFam" id="3.30.160.60:FF:000295">
    <property type="entry name" value="zinc finger protein 19"/>
    <property type="match status" value="1"/>
</dbReference>
<dbReference type="FunFam" id="3.30.160.60:FF:000726">
    <property type="entry name" value="Zinc finger protein 214"/>
    <property type="match status" value="1"/>
</dbReference>
<dbReference type="FunFam" id="3.30.160.60:FF:002343">
    <property type="entry name" value="Zinc finger protein 33A"/>
    <property type="match status" value="1"/>
</dbReference>
<dbReference type="FunFam" id="3.30.160.60:FF:000690">
    <property type="entry name" value="Zinc finger protein 354C"/>
    <property type="match status" value="2"/>
</dbReference>
<dbReference type="FunFam" id="3.30.160.60:FF:001291">
    <property type="entry name" value="Zinc finger protein 354C"/>
    <property type="match status" value="1"/>
</dbReference>
<dbReference type="FunFam" id="3.30.160.60:FF:000016">
    <property type="entry name" value="zinc finger protein 37 homolog"/>
    <property type="match status" value="2"/>
</dbReference>
<dbReference type="FunFam" id="3.30.160.60:FF:001026">
    <property type="entry name" value="zinc finger protein 383"/>
    <property type="match status" value="1"/>
</dbReference>
<dbReference type="Gene3D" id="6.10.140.140">
    <property type="match status" value="1"/>
</dbReference>
<dbReference type="Gene3D" id="3.30.160.60">
    <property type="entry name" value="Classic Zinc Finger"/>
    <property type="match status" value="11"/>
</dbReference>
<dbReference type="InterPro" id="IPR001909">
    <property type="entry name" value="KRAB"/>
</dbReference>
<dbReference type="InterPro" id="IPR036051">
    <property type="entry name" value="KRAB_dom_sf"/>
</dbReference>
<dbReference type="InterPro" id="IPR036236">
    <property type="entry name" value="Znf_C2H2_sf"/>
</dbReference>
<dbReference type="InterPro" id="IPR013087">
    <property type="entry name" value="Znf_C2H2_type"/>
</dbReference>
<dbReference type="PANTHER" id="PTHR24394">
    <property type="entry name" value="ZINC FINGER PROTEIN"/>
    <property type="match status" value="1"/>
</dbReference>
<dbReference type="PANTHER" id="PTHR24394:SF48">
    <property type="entry name" value="ZINC FINGER PROTEIN 771"/>
    <property type="match status" value="1"/>
</dbReference>
<dbReference type="Pfam" id="PF01352">
    <property type="entry name" value="KRAB"/>
    <property type="match status" value="1"/>
</dbReference>
<dbReference type="Pfam" id="PF00096">
    <property type="entry name" value="zf-C2H2"/>
    <property type="match status" value="8"/>
</dbReference>
<dbReference type="Pfam" id="PF13465">
    <property type="entry name" value="zf-H2C2_2"/>
    <property type="match status" value="1"/>
</dbReference>
<dbReference type="SMART" id="SM00349">
    <property type="entry name" value="KRAB"/>
    <property type="match status" value="1"/>
</dbReference>
<dbReference type="SMART" id="SM00355">
    <property type="entry name" value="ZnF_C2H2"/>
    <property type="match status" value="11"/>
</dbReference>
<dbReference type="SUPFAM" id="SSF57667">
    <property type="entry name" value="beta-beta-alpha zinc fingers"/>
    <property type="match status" value="6"/>
</dbReference>
<dbReference type="SUPFAM" id="SSF109640">
    <property type="entry name" value="KRAB domain (Kruppel-associated box)"/>
    <property type="match status" value="1"/>
</dbReference>
<dbReference type="PROSITE" id="PS50805">
    <property type="entry name" value="KRAB"/>
    <property type="match status" value="1"/>
</dbReference>
<dbReference type="PROSITE" id="PS00028">
    <property type="entry name" value="ZINC_FINGER_C2H2_1"/>
    <property type="match status" value="11"/>
</dbReference>
<dbReference type="PROSITE" id="PS50157">
    <property type="entry name" value="ZINC_FINGER_C2H2_2"/>
    <property type="match status" value="11"/>
</dbReference>
<sequence>MAVDLLAARGTEPVTFRDVAVSFSQDEWLHLDPAQRSLYREVMLENYSNLASLGFQASIPPVIGKLQKGQDPCMEREAPEDTCLDFEIWPEIEALPPKQDVLTKETSHGLIKNGSTKCVYWKISFGELVKTECRDIAQEQEKKVHGPGAESPKETTSEDGTPTGFEPEKPLFISKALVSQEGDPTESVPATYHTSEKDLPQDFDLMRSFQMYPGQKPHVCSECGKGFTQSLHLLEHKRLHTGEKPYKCSECGKSFSHRSSLLAHQRTHTGEKPYKCSECEKAFGSSSTLIKHLRVHTGEKPYRCRQCGKAFSQCSTLTVHQRIHTGEKLYKCAECDKAFNCRAKLHRHQRIHTGEKPYKCAECGKGYSQFPSLAEHQRLHTGEQLCQCLQCGRTFTRVSTLIEHQRIHTGQKPYQCNECGKTFNQYSSFNEHRKIHTGEKLYTCEECGKAFGCKSNLYRHQRIHTGEKPYQCNQCGKAFSQYSFLTEHERIHTGEKLYKCMECGKAYSYRSNLCRHKKVHLKERLYKWKEYGTPFIYGSSLTPYQKFLKGDKPENFNSSL</sequence>
<protein>
    <recommendedName>
        <fullName>Zinc finger protein 354C</fullName>
    </recommendedName>
    <alternativeName>
        <fullName>Kidney, ischemia, and developmentally-regulated protein 3</fullName>
    </alternativeName>
</protein>